<protein>
    <recommendedName>
        <fullName>Protein disulfide-isomerase</fullName>
        <shortName>PDI</shortName>
        <shortName>dPDI</shortName>
        <ecNumber>5.3.4.1</ecNumber>
    </recommendedName>
</protein>
<name>PDI_DROME</name>
<dbReference type="EC" id="5.3.4.1"/>
<dbReference type="EMBL" id="U18973">
    <property type="protein sequence ID" value="AAA86480.1"/>
    <property type="molecule type" value="mRNA"/>
</dbReference>
<dbReference type="EMBL" id="AE014296">
    <property type="protein sequence ID" value="AAF49659.1"/>
    <property type="molecule type" value="Genomic_DNA"/>
</dbReference>
<dbReference type="EMBL" id="AE014296">
    <property type="protein sequence ID" value="AAN11793.1"/>
    <property type="molecule type" value="Genomic_DNA"/>
</dbReference>
<dbReference type="EMBL" id="BT001544">
    <property type="protein sequence ID" value="AAN71299.1"/>
    <property type="molecule type" value="mRNA"/>
</dbReference>
<dbReference type="EMBL" id="BT003181">
    <property type="protein sequence ID" value="AAO24936.1"/>
    <property type="status" value="ALT_FRAME"/>
    <property type="molecule type" value="mRNA"/>
</dbReference>
<dbReference type="EMBL" id="BT011488">
    <property type="protein sequence ID" value="AAR99146.1"/>
    <property type="molecule type" value="mRNA"/>
</dbReference>
<dbReference type="EMBL" id="BT012439">
    <property type="protein sequence ID" value="AAS93710.1"/>
    <property type="molecule type" value="mRNA"/>
</dbReference>
<dbReference type="RefSeq" id="NP_001287070.1">
    <molecule id="P54399-1"/>
    <property type="nucleotide sequence ID" value="NM_001300141.1"/>
</dbReference>
<dbReference type="RefSeq" id="NP_524079.1">
    <molecule id="P54399-1"/>
    <property type="nucleotide sequence ID" value="NM_079355.3"/>
</dbReference>
<dbReference type="SMR" id="P54399"/>
<dbReference type="BioGRID" id="64973">
    <property type="interactions" value="87"/>
</dbReference>
<dbReference type="DIP" id="DIP-21766N"/>
<dbReference type="FunCoup" id="P54399">
    <property type="interactions" value="1477"/>
</dbReference>
<dbReference type="IntAct" id="P54399">
    <property type="interactions" value="165"/>
</dbReference>
<dbReference type="STRING" id="7227.FBpp0312224"/>
<dbReference type="GlyGen" id="P54399">
    <property type="glycosylation" value="1 site, 1 O-linked glycan (1 site)"/>
</dbReference>
<dbReference type="PaxDb" id="7227-FBpp0075401"/>
<dbReference type="DNASU" id="39651"/>
<dbReference type="EnsemblMetazoa" id="FBtr0075648">
    <molecule id="P54399-1"/>
    <property type="protein sequence ID" value="FBpp0075401"/>
    <property type="gene ID" value="FBgn0286818"/>
</dbReference>
<dbReference type="EnsemblMetazoa" id="FBtr0346644">
    <molecule id="P54399-1"/>
    <property type="protein sequence ID" value="FBpp0312224"/>
    <property type="gene ID" value="FBgn0286818"/>
</dbReference>
<dbReference type="GeneID" id="39651"/>
<dbReference type="KEGG" id="dme:Dmel_CG6988"/>
<dbReference type="UCSC" id="CG6988-RD">
    <property type="organism name" value="d. melanogaster"/>
</dbReference>
<dbReference type="AGR" id="FB:FBgn0286818"/>
<dbReference type="CTD" id="39651"/>
<dbReference type="FlyBase" id="FBgn0286818">
    <property type="gene designation" value="Pdi"/>
</dbReference>
<dbReference type="VEuPathDB" id="VectorBase:FBgn0286818"/>
<dbReference type="eggNOG" id="KOG0190">
    <property type="taxonomic scope" value="Eukaryota"/>
</dbReference>
<dbReference type="HOGENOM" id="CLU_025879_1_0_1"/>
<dbReference type="InParanoid" id="P54399"/>
<dbReference type="OMA" id="FFGMKKD"/>
<dbReference type="OrthoDB" id="72053at2759"/>
<dbReference type="PhylomeDB" id="P54399"/>
<dbReference type="Reactome" id="R-DME-1650814">
    <property type="pathway name" value="Collagen biosynthesis and modifying enzymes"/>
</dbReference>
<dbReference type="Reactome" id="R-DME-264876">
    <property type="pathway name" value="Insulin processing"/>
</dbReference>
<dbReference type="Reactome" id="R-DME-381426">
    <property type="pathway name" value="Regulation of Insulin-like Growth Factor (IGF) transport and uptake by Insulin-like Growth Factor Binding Proteins (IGFBPs)"/>
</dbReference>
<dbReference type="Reactome" id="R-DME-5358346">
    <property type="pathway name" value="Hedgehog ligand biogenesis"/>
</dbReference>
<dbReference type="Reactome" id="R-DME-8957275">
    <property type="pathway name" value="Post-translational protein phosphorylation"/>
</dbReference>
<dbReference type="Reactome" id="R-DME-8964041">
    <property type="pathway name" value="LDL remodeling"/>
</dbReference>
<dbReference type="BioGRID-ORCS" id="39651">
    <property type="hits" value="0 hits in 3 CRISPR screens"/>
</dbReference>
<dbReference type="ChiTaRS" id="Pdi">
    <property type="organism name" value="fly"/>
</dbReference>
<dbReference type="GenomeRNAi" id="39651"/>
<dbReference type="PRO" id="PR:P54399"/>
<dbReference type="Proteomes" id="UP000000803">
    <property type="component" value="Chromosome 3L"/>
</dbReference>
<dbReference type="Bgee" id="FBgn0286818">
    <property type="expression patterns" value="Expressed in saliva-secreting gland and 259 other cell types or tissues"/>
</dbReference>
<dbReference type="ExpressionAtlas" id="P54399">
    <property type="expression patterns" value="baseline and differential"/>
</dbReference>
<dbReference type="GO" id="GO:0060187">
    <property type="term" value="C:cell pole"/>
    <property type="evidence" value="ECO:0000314"/>
    <property type="project" value="FlyBase"/>
</dbReference>
<dbReference type="GO" id="GO:0005737">
    <property type="term" value="C:cytoplasm"/>
    <property type="evidence" value="ECO:0000314"/>
    <property type="project" value="FlyBase"/>
</dbReference>
<dbReference type="GO" id="GO:0012505">
    <property type="term" value="C:endomembrane system"/>
    <property type="evidence" value="ECO:0007005"/>
    <property type="project" value="FlyBase"/>
</dbReference>
<dbReference type="GO" id="GO:0005783">
    <property type="term" value="C:endoplasmic reticulum"/>
    <property type="evidence" value="ECO:0000314"/>
    <property type="project" value="FlyBase"/>
</dbReference>
<dbReference type="GO" id="GO:0005788">
    <property type="term" value="C:endoplasmic reticulum lumen"/>
    <property type="evidence" value="ECO:0007669"/>
    <property type="project" value="UniProtKB-SubCell"/>
</dbReference>
<dbReference type="GO" id="GO:0005615">
    <property type="term" value="C:extracellular space"/>
    <property type="evidence" value="ECO:0000314"/>
    <property type="project" value="FlyBase"/>
</dbReference>
<dbReference type="GO" id="GO:0045169">
    <property type="term" value="C:fusome"/>
    <property type="evidence" value="ECO:0000314"/>
    <property type="project" value="FlyBase"/>
</dbReference>
<dbReference type="GO" id="GO:0043025">
    <property type="term" value="C:neuronal cell body"/>
    <property type="evidence" value="ECO:0000314"/>
    <property type="project" value="FlyBase"/>
</dbReference>
<dbReference type="GO" id="GO:0005635">
    <property type="term" value="C:nuclear envelope"/>
    <property type="evidence" value="ECO:0000314"/>
    <property type="project" value="FlyBase"/>
</dbReference>
<dbReference type="GO" id="GO:0048471">
    <property type="term" value="C:perinuclear region of cytoplasm"/>
    <property type="evidence" value="ECO:0000314"/>
    <property type="project" value="FlyBase"/>
</dbReference>
<dbReference type="GO" id="GO:0005791">
    <property type="term" value="C:rough endoplasmic reticulum"/>
    <property type="evidence" value="ECO:0000314"/>
    <property type="project" value="FlyBase"/>
</dbReference>
<dbReference type="GO" id="GO:0070732">
    <property type="term" value="C:spindle envelope"/>
    <property type="evidence" value="ECO:0000314"/>
    <property type="project" value="FlyBase"/>
</dbReference>
<dbReference type="GO" id="GO:0003756">
    <property type="term" value="F:protein disulfide isomerase activity"/>
    <property type="evidence" value="ECO:0000318"/>
    <property type="project" value="GO_Central"/>
</dbReference>
<dbReference type="GO" id="GO:0006457">
    <property type="term" value="P:protein folding"/>
    <property type="evidence" value="ECO:0000318"/>
    <property type="project" value="GO_Central"/>
</dbReference>
<dbReference type="GO" id="GO:0034976">
    <property type="term" value="P:response to endoplasmic reticulum stress"/>
    <property type="evidence" value="ECO:0000318"/>
    <property type="project" value="GO_Central"/>
</dbReference>
<dbReference type="CDD" id="cd02961">
    <property type="entry name" value="PDI_a_family"/>
    <property type="match status" value="1"/>
</dbReference>
<dbReference type="CDD" id="cd02995">
    <property type="entry name" value="PDI_a_PDI_a'_C"/>
    <property type="match status" value="1"/>
</dbReference>
<dbReference type="CDD" id="cd02982">
    <property type="entry name" value="PDI_b'_family"/>
    <property type="match status" value="1"/>
</dbReference>
<dbReference type="CDD" id="cd02981">
    <property type="entry name" value="PDI_b_family"/>
    <property type="match status" value="1"/>
</dbReference>
<dbReference type="FunFam" id="3.40.30.10:FF:000023">
    <property type="entry name" value="Protein disulfide-isomerase"/>
    <property type="match status" value="1"/>
</dbReference>
<dbReference type="FunFam" id="3.40.30.10:FF:000030">
    <property type="entry name" value="Protein disulfide-isomerase"/>
    <property type="match status" value="1"/>
</dbReference>
<dbReference type="FunFam" id="3.40.30.10:FF:000027">
    <property type="entry name" value="protein disulfide-isomerase A2"/>
    <property type="match status" value="1"/>
</dbReference>
<dbReference type="FunFam" id="3.40.30.10:FF:000042">
    <property type="entry name" value="protein disulfide-isomerase A2"/>
    <property type="match status" value="1"/>
</dbReference>
<dbReference type="Gene3D" id="3.40.30.10">
    <property type="entry name" value="Glutaredoxin"/>
    <property type="match status" value="4"/>
</dbReference>
<dbReference type="InterPro" id="IPR005788">
    <property type="entry name" value="PDI_thioredoxin-like_dom"/>
</dbReference>
<dbReference type="InterPro" id="IPR005792">
    <property type="entry name" value="Prot_disulphide_isomerase"/>
</dbReference>
<dbReference type="InterPro" id="IPR036249">
    <property type="entry name" value="Thioredoxin-like_sf"/>
</dbReference>
<dbReference type="InterPro" id="IPR017937">
    <property type="entry name" value="Thioredoxin_CS"/>
</dbReference>
<dbReference type="InterPro" id="IPR013766">
    <property type="entry name" value="Thioredoxin_domain"/>
</dbReference>
<dbReference type="NCBIfam" id="TIGR01130">
    <property type="entry name" value="ER_PDI_fam"/>
    <property type="match status" value="1"/>
</dbReference>
<dbReference type="NCBIfam" id="TIGR01126">
    <property type="entry name" value="pdi_dom"/>
    <property type="match status" value="2"/>
</dbReference>
<dbReference type="PANTHER" id="PTHR18929">
    <property type="entry name" value="PROTEIN DISULFIDE ISOMERASE"/>
    <property type="match status" value="1"/>
</dbReference>
<dbReference type="PANTHER" id="PTHR18929:SF240">
    <property type="entry name" value="PROTEIN DISULFIDE-ISOMERASE"/>
    <property type="match status" value="1"/>
</dbReference>
<dbReference type="Pfam" id="PF00085">
    <property type="entry name" value="Thioredoxin"/>
    <property type="match status" value="2"/>
</dbReference>
<dbReference type="Pfam" id="PF13848">
    <property type="entry name" value="Thioredoxin_6"/>
    <property type="match status" value="1"/>
</dbReference>
<dbReference type="PRINTS" id="PR00421">
    <property type="entry name" value="THIOREDOXIN"/>
</dbReference>
<dbReference type="SUPFAM" id="SSF52833">
    <property type="entry name" value="Thioredoxin-like"/>
    <property type="match status" value="4"/>
</dbReference>
<dbReference type="PROSITE" id="PS00014">
    <property type="entry name" value="ER_TARGET"/>
    <property type="match status" value="1"/>
</dbReference>
<dbReference type="PROSITE" id="PS00194">
    <property type="entry name" value="THIOREDOXIN_1"/>
    <property type="match status" value="2"/>
</dbReference>
<dbReference type="PROSITE" id="PS51352">
    <property type="entry name" value="THIOREDOXIN_2"/>
    <property type="match status" value="2"/>
</dbReference>
<sequence length="496" mass="55781">MKFLICALFLAASYVAASAEAEVKVEEGVLVATVDNFKQLIADNEFVLVEFYAPWCGHCKALAPEYAKAAQQLAEKESPIKLAKVDATVEGELAEQYAVRGYPTLKFFRSGSPVEYSGGRQAADIIAWVTKKTGPPAKDLTSVADAEQFLKDNEIAIIGFFKDLESEEAKTFTKVANALDSFVFGVSSNADVIAKYEAKDNGVVLFKPFDDKKSVFEGELNEENLKKFAQVQSLPLIVDFNHESASKIFGGSIKSHLLFFVSREGGHIEKYVDPLKEIAKKYRDDILFVTISSDEEDHTRIFEFFGMNKEEVPTIRLIKLEEDMAKYKPESDDLSAETIEAFLKKFLDGKLKQHLLSQELPEDWDKNPVKVLVSSNFESVALDKSKSVLVEFYAPWCGHCKQLAPIYDQLAEKYKDNEDIVIAKMDSTANELESIKISSFPTIKYFRKEDNKVIDFNLDRTLDDFVKFLDANGEVADSEPVEETEEEEEAPKKDEL</sequence>
<keyword id="KW-0025">Alternative splicing</keyword>
<keyword id="KW-1015">Disulfide bond</keyword>
<keyword id="KW-0256">Endoplasmic reticulum</keyword>
<keyword id="KW-0413">Isomerase</keyword>
<keyword id="KW-0676">Redox-active center</keyword>
<keyword id="KW-1185">Reference proteome</keyword>
<keyword id="KW-0677">Repeat</keyword>
<keyword id="KW-0732">Signal</keyword>
<evidence type="ECO:0000250" key="1"/>
<evidence type="ECO:0000255" key="2"/>
<evidence type="ECO:0000255" key="3">
    <source>
        <dbReference type="PROSITE-ProRule" id="PRU00691"/>
    </source>
</evidence>
<evidence type="ECO:0000255" key="4">
    <source>
        <dbReference type="PROSITE-ProRule" id="PRU10138"/>
    </source>
</evidence>
<evidence type="ECO:0000256" key="5">
    <source>
        <dbReference type="SAM" id="MobiDB-lite"/>
    </source>
</evidence>
<evidence type="ECO:0000269" key="6">
    <source>
    </source>
</evidence>
<evidence type="ECO:0000303" key="7">
    <source ref="5"/>
</evidence>
<evidence type="ECO:0000305" key="8"/>
<accession>P54399</accession>
<accession>Q53YH5</accession>
<accession>Q86PE2</accession>
<accession>Q8IQL8</accession>
<accession>Q9VUL7</accession>
<proteinExistence type="evidence at transcript level"/>
<feature type="signal peptide" evidence="2">
    <location>
        <begin position="1"/>
        <end position="18"/>
    </location>
</feature>
<feature type="chain" id="PRO_0000034202" description="Protein disulfide-isomerase">
    <location>
        <begin position="19"/>
        <end position="496"/>
    </location>
</feature>
<feature type="domain" description="Thioredoxin 1" evidence="3">
    <location>
        <begin position="19"/>
        <end position="134"/>
    </location>
</feature>
<feature type="domain" description="Thioredoxin 2" evidence="3">
    <location>
        <begin position="349"/>
        <end position="474"/>
    </location>
</feature>
<feature type="region of interest" description="Disordered" evidence="5">
    <location>
        <begin position="473"/>
        <end position="496"/>
    </location>
</feature>
<feature type="short sequence motif" description="Prevents secretion from ER">
    <location>
        <begin position="493"/>
        <end position="496"/>
    </location>
</feature>
<feature type="compositionally biased region" description="Acidic residues" evidence="5">
    <location>
        <begin position="476"/>
        <end position="489"/>
    </location>
</feature>
<feature type="active site" description="Nucleophile" evidence="1">
    <location>
        <position position="56"/>
    </location>
</feature>
<feature type="active site" description="Nucleophile" evidence="1">
    <location>
        <position position="59"/>
    </location>
</feature>
<feature type="active site" description="Nucleophile" evidence="1">
    <location>
        <position position="397"/>
    </location>
</feature>
<feature type="active site" description="Nucleophile" evidence="1">
    <location>
        <position position="400"/>
    </location>
</feature>
<feature type="site" description="Contributes to redox potential value" evidence="1">
    <location>
        <position position="57"/>
    </location>
</feature>
<feature type="site" description="Contributes to redox potential value" evidence="1">
    <location>
        <position position="58"/>
    </location>
</feature>
<feature type="site" description="Lowers pKa of C-terminal Cys of first active site" evidence="1">
    <location>
        <position position="120"/>
    </location>
</feature>
<feature type="site" description="Contributes to redox potential value" evidence="1">
    <location>
        <position position="398"/>
    </location>
</feature>
<feature type="site" description="Contributes to redox potential value" evidence="1">
    <location>
        <position position="399"/>
    </location>
</feature>
<feature type="site" description="Lowers pKa of C-terminal Cys of second active site" evidence="1">
    <location>
        <position position="460"/>
    </location>
</feature>
<feature type="disulfide bond" description="Redox-active" evidence="3">
    <location>
        <begin position="56"/>
        <end position="59"/>
    </location>
</feature>
<feature type="disulfide bond" description="Redox-active" evidence="3">
    <location>
        <begin position="397"/>
        <end position="400"/>
    </location>
</feature>
<feature type="splice variant" id="VSP_035858" description="In isoform D." evidence="7">
    <location>
        <begin position="1"/>
        <end position="306"/>
    </location>
</feature>
<feature type="sequence conflict" description="In Ref. 5; AAO24936." evidence="8" ref="5">
    <original>I</original>
    <variation>T</variation>
    <location>
        <position position="406"/>
    </location>
</feature>
<gene>
    <name type="primary">Pdi</name>
    <name type="ORF">CG6988</name>
</gene>
<reference key="1">
    <citation type="journal article" date="1995" name="Insect Biochem. Mol. Biol.">
        <title>A Drosophila gene that encodes a member of the protein disulfide isomerase/phospholipase C-alpha family.</title>
        <authorList>
            <person name="McKay R.R."/>
            <person name="Zhu L."/>
            <person name="Shortridge R.D."/>
        </authorList>
    </citation>
    <scope>NUCLEOTIDE SEQUENCE [MRNA] (ISOFORM A)</scope>
    <scope>TISSUE SPECIFICITY</scope>
    <scope>DEVELOPMENTAL STAGE</scope>
    <source>
        <tissue>Head</tissue>
    </source>
</reference>
<reference key="2">
    <citation type="journal article" date="2000" name="Science">
        <title>The genome sequence of Drosophila melanogaster.</title>
        <authorList>
            <person name="Adams M.D."/>
            <person name="Celniker S.E."/>
            <person name="Holt R.A."/>
            <person name="Evans C.A."/>
            <person name="Gocayne J.D."/>
            <person name="Amanatides P.G."/>
            <person name="Scherer S.E."/>
            <person name="Li P.W."/>
            <person name="Hoskins R.A."/>
            <person name="Galle R.F."/>
            <person name="George R.A."/>
            <person name="Lewis S.E."/>
            <person name="Richards S."/>
            <person name="Ashburner M."/>
            <person name="Henderson S.N."/>
            <person name="Sutton G.G."/>
            <person name="Wortman J.R."/>
            <person name="Yandell M.D."/>
            <person name="Zhang Q."/>
            <person name="Chen L.X."/>
            <person name="Brandon R.C."/>
            <person name="Rogers Y.-H.C."/>
            <person name="Blazej R.G."/>
            <person name="Champe M."/>
            <person name="Pfeiffer B.D."/>
            <person name="Wan K.H."/>
            <person name="Doyle C."/>
            <person name="Baxter E.G."/>
            <person name="Helt G."/>
            <person name="Nelson C.R."/>
            <person name="Miklos G.L.G."/>
            <person name="Abril J.F."/>
            <person name="Agbayani A."/>
            <person name="An H.-J."/>
            <person name="Andrews-Pfannkoch C."/>
            <person name="Baldwin D."/>
            <person name="Ballew R.M."/>
            <person name="Basu A."/>
            <person name="Baxendale J."/>
            <person name="Bayraktaroglu L."/>
            <person name="Beasley E.M."/>
            <person name="Beeson K.Y."/>
            <person name="Benos P.V."/>
            <person name="Berman B.P."/>
            <person name="Bhandari D."/>
            <person name="Bolshakov S."/>
            <person name="Borkova D."/>
            <person name="Botchan M.R."/>
            <person name="Bouck J."/>
            <person name="Brokstein P."/>
            <person name="Brottier P."/>
            <person name="Burtis K.C."/>
            <person name="Busam D.A."/>
            <person name="Butler H."/>
            <person name="Cadieu E."/>
            <person name="Center A."/>
            <person name="Chandra I."/>
            <person name="Cherry J.M."/>
            <person name="Cawley S."/>
            <person name="Dahlke C."/>
            <person name="Davenport L.B."/>
            <person name="Davies P."/>
            <person name="de Pablos B."/>
            <person name="Delcher A."/>
            <person name="Deng Z."/>
            <person name="Mays A.D."/>
            <person name="Dew I."/>
            <person name="Dietz S.M."/>
            <person name="Dodson K."/>
            <person name="Doup L.E."/>
            <person name="Downes M."/>
            <person name="Dugan-Rocha S."/>
            <person name="Dunkov B.C."/>
            <person name="Dunn P."/>
            <person name="Durbin K.J."/>
            <person name="Evangelista C.C."/>
            <person name="Ferraz C."/>
            <person name="Ferriera S."/>
            <person name="Fleischmann W."/>
            <person name="Fosler C."/>
            <person name="Gabrielian A.E."/>
            <person name="Garg N.S."/>
            <person name="Gelbart W.M."/>
            <person name="Glasser K."/>
            <person name="Glodek A."/>
            <person name="Gong F."/>
            <person name="Gorrell J.H."/>
            <person name="Gu Z."/>
            <person name="Guan P."/>
            <person name="Harris M."/>
            <person name="Harris N.L."/>
            <person name="Harvey D.A."/>
            <person name="Heiman T.J."/>
            <person name="Hernandez J.R."/>
            <person name="Houck J."/>
            <person name="Hostin D."/>
            <person name="Houston K.A."/>
            <person name="Howland T.J."/>
            <person name="Wei M.-H."/>
            <person name="Ibegwam C."/>
            <person name="Jalali M."/>
            <person name="Kalush F."/>
            <person name="Karpen G.H."/>
            <person name="Ke Z."/>
            <person name="Kennison J.A."/>
            <person name="Ketchum K.A."/>
            <person name="Kimmel B.E."/>
            <person name="Kodira C.D."/>
            <person name="Kraft C.L."/>
            <person name="Kravitz S."/>
            <person name="Kulp D."/>
            <person name="Lai Z."/>
            <person name="Lasko P."/>
            <person name="Lei Y."/>
            <person name="Levitsky A.A."/>
            <person name="Li J.H."/>
            <person name="Li Z."/>
            <person name="Liang Y."/>
            <person name="Lin X."/>
            <person name="Liu X."/>
            <person name="Mattei B."/>
            <person name="McIntosh T.C."/>
            <person name="McLeod M.P."/>
            <person name="McPherson D."/>
            <person name="Merkulov G."/>
            <person name="Milshina N.V."/>
            <person name="Mobarry C."/>
            <person name="Morris J."/>
            <person name="Moshrefi A."/>
            <person name="Mount S.M."/>
            <person name="Moy M."/>
            <person name="Murphy B."/>
            <person name="Murphy L."/>
            <person name="Muzny D.M."/>
            <person name="Nelson D.L."/>
            <person name="Nelson D.R."/>
            <person name="Nelson K.A."/>
            <person name="Nixon K."/>
            <person name="Nusskern D.R."/>
            <person name="Pacleb J.M."/>
            <person name="Palazzolo M."/>
            <person name="Pittman G.S."/>
            <person name="Pan S."/>
            <person name="Pollard J."/>
            <person name="Puri V."/>
            <person name="Reese M.G."/>
            <person name="Reinert K."/>
            <person name="Remington K."/>
            <person name="Saunders R.D.C."/>
            <person name="Scheeler F."/>
            <person name="Shen H."/>
            <person name="Shue B.C."/>
            <person name="Siden-Kiamos I."/>
            <person name="Simpson M."/>
            <person name="Skupski M.P."/>
            <person name="Smith T.J."/>
            <person name="Spier E."/>
            <person name="Spradling A.C."/>
            <person name="Stapleton M."/>
            <person name="Strong R."/>
            <person name="Sun E."/>
            <person name="Svirskas R."/>
            <person name="Tector C."/>
            <person name="Turner R."/>
            <person name="Venter E."/>
            <person name="Wang A.H."/>
            <person name="Wang X."/>
            <person name="Wang Z.-Y."/>
            <person name="Wassarman D.A."/>
            <person name="Weinstock G.M."/>
            <person name="Weissenbach J."/>
            <person name="Williams S.M."/>
            <person name="Woodage T."/>
            <person name="Worley K.C."/>
            <person name="Wu D."/>
            <person name="Yang S."/>
            <person name="Yao Q.A."/>
            <person name="Ye J."/>
            <person name="Yeh R.-F."/>
            <person name="Zaveri J.S."/>
            <person name="Zhan M."/>
            <person name="Zhang G."/>
            <person name="Zhao Q."/>
            <person name="Zheng L."/>
            <person name="Zheng X.H."/>
            <person name="Zhong F.N."/>
            <person name="Zhong W."/>
            <person name="Zhou X."/>
            <person name="Zhu S.C."/>
            <person name="Zhu X."/>
            <person name="Smith H.O."/>
            <person name="Gibbs R.A."/>
            <person name="Myers E.W."/>
            <person name="Rubin G.M."/>
            <person name="Venter J.C."/>
        </authorList>
    </citation>
    <scope>NUCLEOTIDE SEQUENCE [LARGE SCALE GENOMIC DNA]</scope>
    <source>
        <strain>Berkeley</strain>
    </source>
</reference>
<reference key="3">
    <citation type="journal article" date="2002" name="Genome Biol.">
        <title>Annotation of the Drosophila melanogaster euchromatic genome: a systematic review.</title>
        <authorList>
            <person name="Misra S."/>
            <person name="Crosby M.A."/>
            <person name="Mungall C.J."/>
            <person name="Matthews B.B."/>
            <person name="Campbell K.S."/>
            <person name="Hradecky P."/>
            <person name="Huang Y."/>
            <person name="Kaminker J.S."/>
            <person name="Millburn G.H."/>
            <person name="Prochnik S.E."/>
            <person name="Smith C.D."/>
            <person name="Tupy J.L."/>
            <person name="Whitfield E.J."/>
            <person name="Bayraktaroglu L."/>
            <person name="Berman B.P."/>
            <person name="Bettencourt B.R."/>
            <person name="Celniker S.E."/>
            <person name="de Grey A.D.N.J."/>
            <person name="Drysdale R.A."/>
            <person name="Harris N.L."/>
            <person name="Richter J."/>
            <person name="Russo S."/>
            <person name="Schroeder A.J."/>
            <person name="Shu S.Q."/>
            <person name="Stapleton M."/>
            <person name="Yamada C."/>
            <person name="Ashburner M."/>
            <person name="Gelbart W.M."/>
            <person name="Rubin G.M."/>
            <person name="Lewis S.E."/>
        </authorList>
    </citation>
    <scope>GENOME REANNOTATION</scope>
    <scope>ALTERNATIVE SPLICING</scope>
    <source>
        <strain>Berkeley</strain>
    </source>
</reference>
<reference key="4">
    <citation type="journal article" date="2002" name="Genome Biol.">
        <title>A Drosophila full-length cDNA resource.</title>
        <authorList>
            <person name="Stapleton M."/>
            <person name="Carlson J.W."/>
            <person name="Brokstein P."/>
            <person name="Yu C."/>
            <person name="Champe M."/>
            <person name="George R.A."/>
            <person name="Guarin H."/>
            <person name="Kronmiller B."/>
            <person name="Pacleb J.M."/>
            <person name="Park S."/>
            <person name="Wan K.H."/>
            <person name="Rubin G.M."/>
            <person name="Celniker S.E."/>
        </authorList>
    </citation>
    <scope>NUCLEOTIDE SEQUENCE [LARGE SCALE MRNA] (ISOFORM A)</scope>
    <source>
        <strain>Berkeley</strain>
        <tissue>Embryo</tissue>
    </source>
</reference>
<reference key="5">
    <citation type="submission" date="2004-04" db="EMBL/GenBank/DDBJ databases">
        <authorList>
            <person name="Stapleton M."/>
            <person name="Brokstein P."/>
            <person name="Hong L."/>
            <person name="Agbayani A."/>
            <person name="Carlson J.W."/>
            <person name="Champe M."/>
            <person name="Chavez C."/>
            <person name="Dorsett V."/>
            <person name="Dresnek D."/>
            <person name="Farfan D."/>
            <person name="Frise E."/>
            <person name="George R.A."/>
            <person name="Gonzalez M."/>
            <person name="Guarin H."/>
            <person name="Kronmiller B."/>
            <person name="Li P.W."/>
            <person name="Liao G."/>
            <person name="Miranda A."/>
            <person name="Mungall C.J."/>
            <person name="Nunoo J."/>
            <person name="Pacleb J.M."/>
            <person name="Paragas V."/>
            <person name="Park S."/>
            <person name="Patel S."/>
            <person name="Phouanenavong S."/>
            <person name="Wan K.H."/>
            <person name="Yu C."/>
            <person name="Lewis S.E."/>
            <person name="Rubin G.M."/>
            <person name="Celniker S.E."/>
        </authorList>
    </citation>
    <scope>NUCLEOTIDE SEQUENCE [LARGE SCALE MRNA] (ISOFORM D)</scope>
    <source>
        <strain>Berkeley</strain>
        <tissue>Embryo</tissue>
        <tissue>Head</tissue>
    </source>
</reference>
<comment type="function">
    <text evidence="1">Participates in the folding of proteins containing disulfide bonds.</text>
</comment>
<comment type="catalytic activity">
    <reaction>
        <text>Catalyzes the rearrangement of -S-S- bonds in proteins.</text>
        <dbReference type="EC" id="5.3.4.1"/>
    </reaction>
</comment>
<comment type="subunit">
    <text evidence="1">Homodimer.</text>
</comment>
<comment type="subcellular location">
    <subcellularLocation>
        <location evidence="4">Endoplasmic reticulum lumen</location>
    </subcellularLocation>
</comment>
<comment type="alternative products">
    <event type="alternative splicing"/>
    <isoform>
        <id>P54399-1</id>
        <name>A</name>
        <sequence type="displayed"/>
    </isoform>
    <isoform>
        <id>P54399-2</id>
        <name>D</name>
        <sequence type="described" ref="VSP_035858"/>
    </isoform>
</comment>
<comment type="tissue specificity">
    <text evidence="6">Expressed in all head and body tissues.</text>
</comment>
<comment type="developmental stage">
    <text evidence="6">Ubiquitously expressed during development.</text>
</comment>
<comment type="similarity">
    <text evidence="8">Belongs to the protein disulfide isomerase family.</text>
</comment>
<comment type="sequence caution" evidence="8">
    <conflict type="frameshift">
        <sequence resource="EMBL-CDS" id="AAO24936"/>
    </conflict>
</comment>
<organism>
    <name type="scientific">Drosophila melanogaster</name>
    <name type="common">Fruit fly</name>
    <dbReference type="NCBI Taxonomy" id="7227"/>
    <lineage>
        <taxon>Eukaryota</taxon>
        <taxon>Metazoa</taxon>
        <taxon>Ecdysozoa</taxon>
        <taxon>Arthropoda</taxon>
        <taxon>Hexapoda</taxon>
        <taxon>Insecta</taxon>
        <taxon>Pterygota</taxon>
        <taxon>Neoptera</taxon>
        <taxon>Endopterygota</taxon>
        <taxon>Diptera</taxon>
        <taxon>Brachycera</taxon>
        <taxon>Muscomorpha</taxon>
        <taxon>Ephydroidea</taxon>
        <taxon>Drosophilidae</taxon>
        <taxon>Drosophila</taxon>
        <taxon>Sophophora</taxon>
    </lineage>
</organism>